<accession>Q8BPB0</accession>
<comment type="function">
    <text evidence="1">Activator of LATS1/2 in the Hippo signaling pathway which plays a pivotal role in organ size control and tumor suppression by restricting proliferation and promoting apoptosis. The core of this pathway is composed of a kinase cascade wherein STK3/MST2 and STK4/MST1, in complex with its regulatory protein SAV1, phosphorylates and activates LATS1/2 in complex with its regulatory protein MOB1, which in turn phosphorylates and inactivates YAP1 oncoprotein and WWTR1/TAZ. Phosphorylation of YAP1 by LATS1/2 inhibits its translocation into the nucleus to regulate cellular genes important for cell proliferation, cell death, and cell migration. Stimulates the kinase activity of STK38L (By similarity).</text>
</comment>
<comment type="subunit">
    <text evidence="1">Binds STK38L. Interacts with LATS1 and LATS2 (By similarity).</text>
</comment>
<comment type="subcellular location">
    <subcellularLocation>
        <location evidence="1">Cytoplasm</location>
    </subcellularLocation>
    <subcellularLocation>
        <location evidence="1">Nucleus</location>
    </subcellularLocation>
</comment>
<comment type="PTM">
    <text evidence="1">Phosphorylated by STK3/MST2 and STK4/MST1 and this phosphorylation enhances its binding to LATS1.</text>
</comment>
<comment type="similarity">
    <text evidence="3">Belongs to the MOB1/phocein family.</text>
</comment>
<organism>
    <name type="scientific">Mus musculus</name>
    <name type="common">Mouse</name>
    <dbReference type="NCBI Taxonomy" id="10090"/>
    <lineage>
        <taxon>Eukaryota</taxon>
        <taxon>Metazoa</taxon>
        <taxon>Chordata</taxon>
        <taxon>Craniata</taxon>
        <taxon>Vertebrata</taxon>
        <taxon>Euteleostomi</taxon>
        <taxon>Mammalia</taxon>
        <taxon>Eutheria</taxon>
        <taxon>Euarchontoglires</taxon>
        <taxon>Glires</taxon>
        <taxon>Rodentia</taxon>
        <taxon>Myomorpha</taxon>
        <taxon>Muroidea</taxon>
        <taxon>Muridae</taxon>
        <taxon>Murinae</taxon>
        <taxon>Mus</taxon>
        <taxon>Mus</taxon>
    </lineage>
</organism>
<protein>
    <recommendedName>
        <fullName>MOB kinase activator 1B</fullName>
    </recommendedName>
    <alternativeName>
        <fullName>Mob1 homolog 1A</fullName>
    </alternativeName>
    <alternativeName>
        <fullName>Mps one binder kinase activator-like 1A</fullName>
    </alternativeName>
</protein>
<feature type="initiator methionine" description="Removed" evidence="2">
    <location>
        <position position="1"/>
    </location>
</feature>
<feature type="chain" id="PRO_0000193565" description="MOB kinase activator 1B">
    <location>
        <begin position="2"/>
        <end position="216"/>
    </location>
</feature>
<feature type="binding site" evidence="1">
    <location>
        <position position="79"/>
    </location>
    <ligand>
        <name>Zn(2+)</name>
        <dbReference type="ChEBI" id="CHEBI:29105"/>
    </ligand>
</feature>
<feature type="binding site" evidence="1">
    <location>
        <position position="84"/>
    </location>
    <ligand>
        <name>Zn(2+)</name>
        <dbReference type="ChEBI" id="CHEBI:29105"/>
    </ligand>
</feature>
<feature type="binding site" evidence="1">
    <location>
        <position position="161"/>
    </location>
    <ligand>
        <name>Zn(2+)</name>
        <dbReference type="ChEBI" id="CHEBI:29105"/>
    </ligand>
</feature>
<feature type="binding site" evidence="1">
    <location>
        <position position="166"/>
    </location>
    <ligand>
        <name>Zn(2+)</name>
        <dbReference type="ChEBI" id="CHEBI:29105"/>
    </ligand>
</feature>
<feature type="modified residue" description="N-acetylserine" evidence="2">
    <location>
        <position position="2"/>
    </location>
</feature>
<feature type="modified residue" description="Phosphothreonine; by STK4/MST1" evidence="2">
    <location>
        <position position="12"/>
    </location>
</feature>
<feature type="modified residue" description="Phosphothreonine; by STK4/MST1" evidence="2">
    <location>
        <position position="35"/>
    </location>
</feature>
<feature type="strand" evidence="4">
    <location>
        <begin position="5"/>
        <end position="9"/>
    </location>
</feature>
<feature type="helix" evidence="4">
    <location>
        <begin position="24"/>
        <end position="34"/>
    </location>
</feature>
<feature type="helix" evidence="4">
    <location>
        <begin position="35"/>
        <end position="38"/>
    </location>
</feature>
<feature type="helix" evidence="4">
    <location>
        <begin position="41"/>
        <end position="44"/>
    </location>
</feature>
<feature type="helix" evidence="4">
    <location>
        <begin position="53"/>
        <end position="74"/>
    </location>
</feature>
<feature type="turn" evidence="4">
    <location>
        <begin position="75"/>
        <end position="78"/>
    </location>
</feature>
<feature type="turn" evidence="4">
    <location>
        <begin position="81"/>
        <end position="83"/>
    </location>
</feature>
<feature type="strand" evidence="4">
    <location>
        <begin position="85"/>
        <end position="92"/>
    </location>
</feature>
<feature type="strand" evidence="4">
    <location>
        <begin position="94"/>
        <end position="98"/>
    </location>
</feature>
<feature type="helix" evidence="4">
    <location>
        <begin position="111"/>
        <end position="126"/>
    </location>
</feature>
<feature type="turn" evidence="4">
    <location>
        <begin position="129"/>
        <end position="131"/>
    </location>
</feature>
<feature type="helix" evidence="4">
    <location>
        <begin position="144"/>
        <end position="173"/>
    </location>
</feature>
<feature type="helix" evidence="4">
    <location>
        <begin position="176"/>
        <end position="193"/>
    </location>
</feature>
<feature type="helix" evidence="4">
    <location>
        <begin position="198"/>
        <end position="201"/>
    </location>
</feature>
<feature type="helix" evidence="4">
    <location>
        <begin position="202"/>
        <end position="204"/>
    </location>
</feature>
<feature type="helix" evidence="4">
    <location>
        <begin position="205"/>
        <end position="209"/>
    </location>
</feature>
<proteinExistence type="evidence at protein level"/>
<evidence type="ECO:0000250" key="1"/>
<evidence type="ECO:0000250" key="2">
    <source>
        <dbReference type="UniProtKB" id="Q7L9L4"/>
    </source>
</evidence>
<evidence type="ECO:0000305" key="3"/>
<evidence type="ECO:0007829" key="4">
    <source>
        <dbReference type="PDB" id="5B5V"/>
    </source>
</evidence>
<reference key="1">
    <citation type="journal article" date="2005" name="Science">
        <title>The transcriptional landscape of the mammalian genome.</title>
        <authorList>
            <person name="Carninci P."/>
            <person name="Kasukawa T."/>
            <person name="Katayama S."/>
            <person name="Gough J."/>
            <person name="Frith M.C."/>
            <person name="Maeda N."/>
            <person name="Oyama R."/>
            <person name="Ravasi T."/>
            <person name="Lenhard B."/>
            <person name="Wells C."/>
            <person name="Kodzius R."/>
            <person name="Shimokawa K."/>
            <person name="Bajic V.B."/>
            <person name="Brenner S.E."/>
            <person name="Batalov S."/>
            <person name="Forrest A.R."/>
            <person name="Zavolan M."/>
            <person name="Davis M.J."/>
            <person name="Wilming L.G."/>
            <person name="Aidinis V."/>
            <person name="Allen J.E."/>
            <person name="Ambesi-Impiombato A."/>
            <person name="Apweiler R."/>
            <person name="Aturaliya R.N."/>
            <person name="Bailey T.L."/>
            <person name="Bansal M."/>
            <person name="Baxter L."/>
            <person name="Beisel K.W."/>
            <person name="Bersano T."/>
            <person name="Bono H."/>
            <person name="Chalk A.M."/>
            <person name="Chiu K.P."/>
            <person name="Choudhary V."/>
            <person name="Christoffels A."/>
            <person name="Clutterbuck D.R."/>
            <person name="Crowe M.L."/>
            <person name="Dalla E."/>
            <person name="Dalrymple B.P."/>
            <person name="de Bono B."/>
            <person name="Della Gatta G."/>
            <person name="di Bernardo D."/>
            <person name="Down T."/>
            <person name="Engstrom P."/>
            <person name="Fagiolini M."/>
            <person name="Faulkner G."/>
            <person name="Fletcher C.F."/>
            <person name="Fukushima T."/>
            <person name="Furuno M."/>
            <person name="Futaki S."/>
            <person name="Gariboldi M."/>
            <person name="Georgii-Hemming P."/>
            <person name="Gingeras T.R."/>
            <person name="Gojobori T."/>
            <person name="Green R.E."/>
            <person name="Gustincich S."/>
            <person name="Harbers M."/>
            <person name="Hayashi Y."/>
            <person name="Hensch T.K."/>
            <person name="Hirokawa N."/>
            <person name="Hill D."/>
            <person name="Huminiecki L."/>
            <person name="Iacono M."/>
            <person name="Ikeo K."/>
            <person name="Iwama A."/>
            <person name="Ishikawa T."/>
            <person name="Jakt M."/>
            <person name="Kanapin A."/>
            <person name="Katoh M."/>
            <person name="Kawasawa Y."/>
            <person name="Kelso J."/>
            <person name="Kitamura H."/>
            <person name="Kitano H."/>
            <person name="Kollias G."/>
            <person name="Krishnan S.P."/>
            <person name="Kruger A."/>
            <person name="Kummerfeld S.K."/>
            <person name="Kurochkin I.V."/>
            <person name="Lareau L.F."/>
            <person name="Lazarevic D."/>
            <person name="Lipovich L."/>
            <person name="Liu J."/>
            <person name="Liuni S."/>
            <person name="McWilliam S."/>
            <person name="Madan Babu M."/>
            <person name="Madera M."/>
            <person name="Marchionni L."/>
            <person name="Matsuda H."/>
            <person name="Matsuzawa S."/>
            <person name="Miki H."/>
            <person name="Mignone F."/>
            <person name="Miyake S."/>
            <person name="Morris K."/>
            <person name="Mottagui-Tabar S."/>
            <person name="Mulder N."/>
            <person name="Nakano N."/>
            <person name="Nakauchi H."/>
            <person name="Ng P."/>
            <person name="Nilsson R."/>
            <person name="Nishiguchi S."/>
            <person name="Nishikawa S."/>
            <person name="Nori F."/>
            <person name="Ohara O."/>
            <person name="Okazaki Y."/>
            <person name="Orlando V."/>
            <person name="Pang K.C."/>
            <person name="Pavan W.J."/>
            <person name="Pavesi G."/>
            <person name="Pesole G."/>
            <person name="Petrovsky N."/>
            <person name="Piazza S."/>
            <person name="Reed J."/>
            <person name="Reid J.F."/>
            <person name="Ring B.Z."/>
            <person name="Ringwald M."/>
            <person name="Rost B."/>
            <person name="Ruan Y."/>
            <person name="Salzberg S.L."/>
            <person name="Sandelin A."/>
            <person name="Schneider C."/>
            <person name="Schoenbach C."/>
            <person name="Sekiguchi K."/>
            <person name="Semple C.A."/>
            <person name="Seno S."/>
            <person name="Sessa L."/>
            <person name="Sheng Y."/>
            <person name="Shibata Y."/>
            <person name="Shimada H."/>
            <person name="Shimada K."/>
            <person name="Silva D."/>
            <person name="Sinclair B."/>
            <person name="Sperling S."/>
            <person name="Stupka E."/>
            <person name="Sugiura K."/>
            <person name="Sultana R."/>
            <person name="Takenaka Y."/>
            <person name="Taki K."/>
            <person name="Tammoja K."/>
            <person name="Tan S.L."/>
            <person name="Tang S."/>
            <person name="Taylor M.S."/>
            <person name="Tegner J."/>
            <person name="Teichmann S.A."/>
            <person name="Ueda H.R."/>
            <person name="van Nimwegen E."/>
            <person name="Verardo R."/>
            <person name="Wei C.L."/>
            <person name="Yagi K."/>
            <person name="Yamanishi H."/>
            <person name="Zabarovsky E."/>
            <person name="Zhu S."/>
            <person name="Zimmer A."/>
            <person name="Hide W."/>
            <person name="Bult C."/>
            <person name="Grimmond S.M."/>
            <person name="Teasdale R.D."/>
            <person name="Liu E.T."/>
            <person name="Brusic V."/>
            <person name="Quackenbush J."/>
            <person name="Wahlestedt C."/>
            <person name="Mattick J.S."/>
            <person name="Hume D.A."/>
            <person name="Kai C."/>
            <person name="Sasaki D."/>
            <person name="Tomaru Y."/>
            <person name="Fukuda S."/>
            <person name="Kanamori-Katayama M."/>
            <person name="Suzuki M."/>
            <person name="Aoki J."/>
            <person name="Arakawa T."/>
            <person name="Iida J."/>
            <person name="Imamura K."/>
            <person name="Itoh M."/>
            <person name="Kato T."/>
            <person name="Kawaji H."/>
            <person name="Kawagashira N."/>
            <person name="Kawashima T."/>
            <person name="Kojima M."/>
            <person name="Kondo S."/>
            <person name="Konno H."/>
            <person name="Nakano K."/>
            <person name="Ninomiya N."/>
            <person name="Nishio T."/>
            <person name="Okada M."/>
            <person name="Plessy C."/>
            <person name="Shibata K."/>
            <person name="Shiraki T."/>
            <person name="Suzuki S."/>
            <person name="Tagami M."/>
            <person name="Waki K."/>
            <person name="Watahiki A."/>
            <person name="Okamura-Oho Y."/>
            <person name="Suzuki H."/>
            <person name="Kawai J."/>
            <person name="Hayashizaki Y."/>
        </authorList>
    </citation>
    <scope>NUCLEOTIDE SEQUENCE [LARGE SCALE MRNA]</scope>
    <source>
        <strain>C57BL/6J</strain>
        <tissue>Pituitary</tissue>
    </source>
</reference>
<reference key="2">
    <citation type="journal article" date="2010" name="Cell">
        <title>A tissue-specific atlas of mouse protein phosphorylation and expression.</title>
        <authorList>
            <person name="Huttlin E.L."/>
            <person name="Jedrychowski M.P."/>
            <person name="Elias J.E."/>
            <person name="Goswami T."/>
            <person name="Rad R."/>
            <person name="Beausoleil S.A."/>
            <person name="Villen J."/>
            <person name="Haas W."/>
            <person name="Sowa M.E."/>
            <person name="Gygi S.P."/>
        </authorList>
    </citation>
    <scope>IDENTIFICATION BY MASS SPECTROMETRY [LARGE SCALE ANALYSIS]</scope>
    <source>
        <tissue>Kidney</tissue>
        <tissue>Liver</tissue>
    </source>
</reference>
<gene>
    <name type="primary">Mob1b</name>
    <name type="synonym">Mobkl1a</name>
</gene>
<dbReference type="EMBL" id="AK077320">
    <property type="protein sequence ID" value="BAC36748.1"/>
    <property type="molecule type" value="mRNA"/>
</dbReference>
<dbReference type="CCDS" id="CCDS39139.1"/>
<dbReference type="RefSeq" id="NP_081011.1">
    <property type="nucleotide sequence ID" value="NM_026735.2"/>
</dbReference>
<dbReference type="PDB" id="5B5V">
    <property type="method" value="X-ray"/>
    <property type="resolution" value="2.19 A"/>
    <property type="chains" value="A/B/C/D/E/F=1-216"/>
</dbReference>
<dbReference type="PDB" id="5B5W">
    <property type="method" value="X-ray"/>
    <property type="resolution" value="2.96 A"/>
    <property type="chains" value="A=33-216"/>
</dbReference>
<dbReference type="PDB" id="5B6B">
    <property type="method" value="X-ray"/>
    <property type="resolution" value="3.54 A"/>
    <property type="chains" value="A/B/D/F/H/K/M/O=1-216"/>
</dbReference>
<dbReference type="PDBsum" id="5B5V"/>
<dbReference type="PDBsum" id="5B5W"/>
<dbReference type="PDBsum" id="5B6B"/>
<dbReference type="SMR" id="Q8BPB0"/>
<dbReference type="FunCoup" id="Q8BPB0">
    <property type="interactions" value="4206"/>
</dbReference>
<dbReference type="STRING" id="10090.ENSMUSP00000006424"/>
<dbReference type="iPTMnet" id="Q8BPB0"/>
<dbReference type="PhosphoSitePlus" id="Q8BPB0"/>
<dbReference type="jPOST" id="Q8BPB0"/>
<dbReference type="PaxDb" id="10090-ENSMUSP00000006424"/>
<dbReference type="ProteomicsDB" id="295575"/>
<dbReference type="Pumba" id="Q8BPB0"/>
<dbReference type="Antibodypedia" id="24395">
    <property type="antibodies" value="389 antibodies from 29 providers"/>
</dbReference>
<dbReference type="DNASU" id="68473"/>
<dbReference type="Ensembl" id="ENSMUST00000006424.8">
    <property type="protein sequence ID" value="ENSMUSP00000006424.8"/>
    <property type="gene ID" value="ENSMUSG00000006262.16"/>
</dbReference>
<dbReference type="GeneID" id="68473"/>
<dbReference type="KEGG" id="mmu:68473"/>
<dbReference type="UCSC" id="uc008yae.1">
    <property type="organism name" value="mouse"/>
</dbReference>
<dbReference type="AGR" id="MGI:1915723"/>
<dbReference type="CTD" id="92597"/>
<dbReference type="MGI" id="MGI:1915723">
    <property type="gene designation" value="Mob1b"/>
</dbReference>
<dbReference type="VEuPathDB" id="HostDB:ENSMUSG00000006262"/>
<dbReference type="eggNOG" id="KOG0440">
    <property type="taxonomic scope" value="Eukaryota"/>
</dbReference>
<dbReference type="GeneTree" id="ENSGT01120000271863"/>
<dbReference type="HOGENOM" id="CLU_038321_3_2_1"/>
<dbReference type="InParanoid" id="Q8BPB0"/>
<dbReference type="OMA" id="VDNEQMF"/>
<dbReference type="OrthoDB" id="8170117at2759"/>
<dbReference type="PhylomeDB" id="Q8BPB0"/>
<dbReference type="TreeFam" id="TF300789"/>
<dbReference type="Reactome" id="R-MMU-2028269">
    <property type="pathway name" value="Signaling by Hippo"/>
</dbReference>
<dbReference type="BioGRID-ORCS" id="68473">
    <property type="hits" value="0 hits in 77 CRISPR screens"/>
</dbReference>
<dbReference type="ChiTaRS" id="Mob1b">
    <property type="organism name" value="mouse"/>
</dbReference>
<dbReference type="PRO" id="PR:Q8BPB0"/>
<dbReference type="Proteomes" id="UP000000589">
    <property type="component" value="Chromosome 5"/>
</dbReference>
<dbReference type="RNAct" id="Q8BPB0">
    <property type="molecule type" value="protein"/>
</dbReference>
<dbReference type="Bgee" id="ENSMUSG00000006262">
    <property type="expression patterns" value="Expressed in superior surface of tongue and 255 other cell types or tissues"/>
</dbReference>
<dbReference type="ExpressionAtlas" id="Q8BPB0">
    <property type="expression patterns" value="baseline and differential"/>
</dbReference>
<dbReference type="GO" id="GO:0005737">
    <property type="term" value="C:cytoplasm"/>
    <property type="evidence" value="ECO:0000250"/>
    <property type="project" value="UniProtKB"/>
</dbReference>
<dbReference type="GO" id="GO:0005634">
    <property type="term" value="C:nucleus"/>
    <property type="evidence" value="ECO:0000250"/>
    <property type="project" value="UniProtKB"/>
</dbReference>
<dbReference type="GO" id="GO:0019209">
    <property type="term" value="F:kinase activator activity"/>
    <property type="evidence" value="ECO:0000250"/>
    <property type="project" value="UniProtKB"/>
</dbReference>
<dbReference type="GO" id="GO:0019900">
    <property type="term" value="F:kinase binding"/>
    <property type="evidence" value="ECO:0000250"/>
    <property type="project" value="UniProtKB"/>
</dbReference>
<dbReference type="GO" id="GO:0046872">
    <property type="term" value="F:metal ion binding"/>
    <property type="evidence" value="ECO:0007669"/>
    <property type="project" value="UniProtKB-KW"/>
</dbReference>
<dbReference type="GO" id="GO:0031952">
    <property type="term" value="P:regulation of protein autophosphorylation"/>
    <property type="evidence" value="ECO:0000250"/>
    <property type="project" value="UniProtKB"/>
</dbReference>
<dbReference type="DisProt" id="DP02570"/>
<dbReference type="FunFam" id="1.20.140.30:FF:000001">
    <property type="entry name" value="MOB kinase activator 1A"/>
    <property type="match status" value="1"/>
</dbReference>
<dbReference type="Gene3D" id="1.20.140.30">
    <property type="entry name" value="MOB kinase activator"/>
    <property type="match status" value="1"/>
</dbReference>
<dbReference type="InterPro" id="IPR005301">
    <property type="entry name" value="MOB_kinase_act_fam"/>
</dbReference>
<dbReference type="InterPro" id="IPR036703">
    <property type="entry name" value="MOB_kinase_act_sf"/>
</dbReference>
<dbReference type="PANTHER" id="PTHR22599">
    <property type="entry name" value="MPS ONE BINDER KINASE ACTIVATOR-LIKE MOB"/>
    <property type="match status" value="1"/>
</dbReference>
<dbReference type="Pfam" id="PF03637">
    <property type="entry name" value="Mob1_phocein"/>
    <property type="match status" value="1"/>
</dbReference>
<dbReference type="SMART" id="SM01388">
    <property type="entry name" value="Mob1_phocein"/>
    <property type="match status" value="1"/>
</dbReference>
<dbReference type="SUPFAM" id="SSF101152">
    <property type="entry name" value="Mob1/phocein"/>
    <property type="match status" value="1"/>
</dbReference>
<name>MOB1B_MOUSE</name>
<keyword id="KW-0002">3D-structure</keyword>
<keyword id="KW-0007">Acetylation</keyword>
<keyword id="KW-0963">Cytoplasm</keyword>
<keyword id="KW-0479">Metal-binding</keyword>
<keyword id="KW-0539">Nucleus</keyword>
<keyword id="KW-0597">Phosphoprotein</keyword>
<keyword id="KW-1185">Reference proteome</keyword>
<keyword id="KW-0862">Zinc</keyword>
<sequence>MSFLFGSRSSKTFKPKKNIPEGSHQYELLKHAEATLGSGNLRMAVMLPEGEDLNEWVAVNTVDFFNQINMLYGTITDFCTEESCPVMSAGPKYEYHWADGTNIKKPIKCSAPKYIDYLMTWVQDQLDDETLFPSKIGVPFPKNFMSVAKTILKRLFRVYAHIYHQHFDPVIQLQEEAHLNTSFKHFIFFVQEFNLIDRRELAPLQELIEKLTSKDR</sequence>